<name>CH10_YEREN</name>
<reference key="1">
    <citation type="journal article" date="1993" name="Res. Microbiol.">
        <title>Cloning and nucleotide sequence analysis of immunodominant heat-shock protein of Yersinia enterocolitica.</title>
        <authorList>
            <person name="Yamamoto T."/>
            <person name="Miura H."/>
            <person name="Ohsumi K."/>
            <person name="Yamaguchi H."/>
            <person name="Taguchi H."/>
            <person name="Ogata S."/>
        </authorList>
    </citation>
    <scope>NUCLEOTIDE SEQUENCE [GENOMIC DNA]</scope>
    <source>
        <strain>Serotype O:3</strain>
    </source>
</reference>
<sequence>MKIRPLHDRVIVKRKEVESKSAGGIVLTGTAAGKSTRGEVLPVGNGRILDNGEIKPLDVKVGDIVIFNDGYGVKSEKIDHEEVLIMSESDILAIVEA</sequence>
<evidence type="ECO:0000255" key="1">
    <source>
        <dbReference type="HAMAP-Rule" id="MF_00580"/>
    </source>
</evidence>
<evidence type="ECO:0000305" key="2"/>
<proteinExistence type="inferred from homology"/>
<feature type="chain" id="PRO_0000174909" description="Co-chaperonin GroES">
    <location>
        <begin position="1"/>
        <end position="97"/>
    </location>
</feature>
<dbReference type="EMBL" id="D14078">
    <property type="protein sequence ID" value="BAA03163.1"/>
    <property type="molecule type" value="Genomic_DNA"/>
</dbReference>
<dbReference type="SMR" id="P48228"/>
<dbReference type="STRING" id="1443113.LC20_04830"/>
<dbReference type="eggNOG" id="COG0234">
    <property type="taxonomic scope" value="Bacteria"/>
</dbReference>
<dbReference type="GO" id="GO:0005737">
    <property type="term" value="C:cytoplasm"/>
    <property type="evidence" value="ECO:0007669"/>
    <property type="project" value="UniProtKB-SubCell"/>
</dbReference>
<dbReference type="GO" id="GO:0005524">
    <property type="term" value="F:ATP binding"/>
    <property type="evidence" value="ECO:0007669"/>
    <property type="project" value="InterPro"/>
</dbReference>
<dbReference type="GO" id="GO:0046872">
    <property type="term" value="F:metal ion binding"/>
    <property type="evidence" value="ECO:0007669"/>
    <property type="project" value="TreeGrafter"/>
</dbReference>
<dbReference type="GO" id="GO:0044183">
    <property type="term" value="F:protein folding chaperone"/>
    <property type="evidence" value="ECO:0007669"/>
    <property type="project" value="InterPro"/>
</dbReference>
<dbReference type="GO" id="GO:0051087">
    <property type="term" value="F:protein-folding chaperone binding"/>
    <property type="evidence" value="ECO:0007669"/>
    <property type="project" value="TreeGrafter"/>
</dbReference>
<dbReference type="GO" id="GO:0051082">
    <property type="term" value="F:unfolded protein binding"/>
    <property type="evidence" value="ECO:0007669"/>
    <property type="project" value="TreeGrafter"/>
</dbReference>
<dbReference type="GO" id="GO:0051085">
    <property type="term" value="P:chaperone cofactor-dependent protein refolding"/>
    <property type="evidence" value="ECO:0007669"/>
    <property type="project" value="TreeGrafter"/>
</dbReference>
<dbReference type="CDD" id="cd00320">
    <property type="entry name" value="cpn10"/>
    <property type="match status" value="1"/>
</dbReference>
<dbReference type="FunFam" id="2.30.33.40:FF:000001">
    <property type="entry name" value="10 kDa chaperonin"/>
    <property type="match status" value="1"/>
</dbReference>
<dbReference type="Gene3D" id="2.30.33.40">
    <property type="entry name" value="GroES chaperonin"/>
    <property type="match status" value="1"/>
</dbReference>
<dbReference type="HAMAP" id="MF_00580">
    <property type="entry name" value="CH10"/>
    <property type="match status" value="1"/>
</dbReference>
<dbReference type="InterPro" id="IPR020818">
    <property type="entry name" value="Chaperonin_GroES"/>
</dbReference>
<dbReference type="InterPro" id="IPR037124">
    <property type="entry name" value="Chaperonin_GroES_sf"/>
</dbReference>
<dbReference type="InterPro" id="IPR018369">
    <property type="entry name" value="Chaprnonin_Cpn10_CS"/>
</dbReference>
<dbReference type="InterPro" id="IPR011032">
    <property type="entry name" value="GroES-like_sf"/>
</dbReference>
<dbReference type="NCBIfam" id="NF001526">
    <property type="entry name" value="PRK00364.1-1"/>
    <property type="match status" value="1"/>
</dbReference>
<dbReference type="NCBIfam" id="NF001527">
    <property type="entry name" value="PRK00364.1-2"/>
    <property type="match status" value="1"/>
</dbReference>
<dbReference type="PANTHER" id="PTHR10772">
    <property type="entry name" value="10 KDA HEAT SHOCK PROTEIN"/>
    <property type="match status" value="1"/>
</dbReference>
<dbReference type="PANTHER" id="PTHR10772:SF58">
    <property type="entry name" value="CO-CHAPERONIN GROES"/>
    <property type="match status" value="1"/>
</dbReference>
<dbReference type="Pfam" id="PF00166">
    <property type="entry name" value="Cpn10"/>
    <property type="match status" value="1"/>
</dbReference>
<dbReference type="PRINTS" id="PR00297">
    <property type="entry name" value="CHAPERONIN10"/>
</dbReference>
<dbReference type="SMART" id="SM00883">
    <property type="entry name" value="Cpn10"/>
    <property type="match status" value="1"/>
</dbReference>
<dbReference type="SUPFAM" id="SSF50129">
    <property type="entry name" value="GroES-like"/>
    <property type="match status" value="1"/>
</dbReference>
<dbReference type="PROSITE" id="PS00681">
    <property type="entry name" value="CHAPERONINS_CPN10"/>
    <property type="match status" value="1"/>
</dbReference>
<keyword id="KW-0143">Chaperone</keyword>
<keyword id="KW-0963">Cytoplasm</keyword>
<organism>
    <name type="scientific">Yersinia enterocolitica</name>
    <dbReference type="NCBI Taxonomy" id="630"/>
    <lineage>
        <taxon>Bacteria</taxon>
        <taxon>Pseudomonadati</taxon>
        <taxon>Pseudomonadota</taxon>
        <taxon>Gammaproteobacteria</taxon>
        <taxon>Enterobacterales</taxon>
        <taxon>Yersiniaceae</taxon>
        <taxon>Yersinia</taxon>
    </lineage>
</organism>
<accession>P48228</accession>
<protein>
    <recommendedName>
        <fullName evidence="1">Co-chaperonin GroES</fullName>
    </recommendedName>
    <alternativeName>
        <fullName evidence="1">10 kDa chaperonin</fullName>
    </alternativeName>
    <alternativeName>
        <fullName evidence="1">Chaperonin-10</fullName>
        <shortName evidence="1">Cpn10</shortName>
    </alternativeName>
</protein>
<comment type="function">
    <text evidence="1">Together with the chaperonin GroEL, plays an essential role in assisting protein folding. The GroEL-GroES system forms a nano-cage that allows encapsulation of the non-native substrate proteins and provides a physical environment optimized to promote and accelerate protein folding. GroES binds to the apical surface of the GroEL ring, thereby capping the opening of the GroEL channel.</text>
</comment>
<comment type="subunit">
    <text evidence="1">Heptamer of 7 subunits arranged in a ring. Interacts with the chaperonin GroEL.</text>
</comment>
<comment type="subcellular location">
    <subcellularLocation>
        <location evidence="1">Cytoplasm</location>
    </subcellularLocation>
</comment>
<comment type="similarity">
    <text evidence="1 2">Belongs to the GroES chaperonin family.</text>
</comment>
<gene>
    <name evidence="1" type="primary">groES</name>
    <name type="synonym">crpB</name>
    <name evidence="1" type="synonym">groS</name>
    <name type="synonym">hsp10</name>
</gene>